<organismHost>
    <name type="scientific">Bos taurus</name>
    <name type="common">Bovine</name>
    <dbReference type="NCBI Taxonomy" id="9913"/>
</organismHost>
<organismHost>
    <name type="scientific">Felis catus</name>
    <name type="common">Cat</name>
    <name type="synonym">Felis silvestris catus</name>
    <dbReference type="NCBI Taxonomy" id="9685"/>
</organismHost>
<organismHost>
    <name type="scientific">Homo sapiens</name>
    <name type="common">Human</name>
    <dbReference type="NCBI Taxonomy" id="9606"/>
</organismHost>
<organismHost>
    <name type="scientific">Loxodonta africana</name>
    <name type="common">African elephant</name>
    <dbReference type="NCBI Taxonomy" id="9785"/>
</organismHost>
<organismHost>
    <name type="scientific">Microtus agrestis</name>
    <name type="common">Short-tailed field vole</name>
    <dbReference type="NCBI Taxonomy" id="29092"/>
</organismHost>
<organismHost>
    <name type="scientific">Mus musculus</name>
    <name type="common">Mouse</name>
    <dbReference type="NCBI Taxonomy" id="10090"/>
</organismHost>
<organismHost>
    <name type="scientific">Myodes glareolus</name>
    <name type="common">Bank vole</name>
    <name type="synonym">Clethrionomys glareolus</name>
    <dbReference type="NCBI Taxonomy" id="447135"/>
</organismHost>
<comment type="function">
    <text evidence="1 5">Inhibits host immune defense by binding to host TNF and various chemokines in the extracellular space (PubMed:8091665). Binds host CC chemokines (beta chemokines) and CXC chemokines (alpha chemokines) (By similarity).</text>
</comment>
<comment type="subcellular location">
    <subcellularLocation>
        <location evidence="5">Secreted</location>
    </subcellularLocation>
</comment>
<comment type="induction">
    <text evidence="2">Expressed in the early phase of the viral replicative cycle.</text>
</comment>
<comment type="similarity">
    <text evidence="6">Belongs to the orthopoxvirus OPG002 family.</text>
</comment>
<feature type="signal peptide" evidence="3">
    <location>
        <begin position="1"/>
        <end position="19"/>
    </location>
</feature>
<feature type="chain" id="PRO_0000034618" description="Soluble TNF receptor II">
    <location>
        <begin position="20"/>
        <end position="351"/>
    </location>
</feature>
<feature type="repeat" description="TNFR-Cys 1">
    <location>
        <begin position="31"/>
        <end position="67"/>
    </location>
</feature>
<feature type="repeat" description="TNFR-Cys 2">
    <location>
        <begin position="69"/>
        <end position="110"/>
    </location>
</feature>
<feature type="glycosylation site" description="N-linked (GlcNAc...) asparagine; by host" evidence="3">
    <location>
        <position position="103"/>
    </location>
</feature>
<feature type="glycosylation site" description="N-linked (GlcNAc...) asparagine; by host" evidence="3">
    <location>
        <position position="191"/>
    </location>
</feature>
<feature type="glycosylation site" description="N-linked (GlcNAc...) asparagine; by host" evidence="3">
    <location>
        <position position="250"/>
    </location>
</feature>
<feature type="disulfide bond" evidence="4">
    <location>
        <begin position="32"/>
        <end position="43"/>
    </location>
</feature>
<feature type="disulfide bond" evidence="4">
    <location>
        <begin position="44"/>
        <end position="57"/>
    </location>
</feature>
<feature type="disulfide bond" evidence="4">
    <location>
        <begin position="47"/>
        <end position="67"/>
    </location>
</feature>
<feature type="disulfide bond" evidence="4">
    <location>
        <begin position="70"/>
        <end position="85"/>
    </location>
</feature>
<feature type="disulfide bond" evidence="4">
    <location>
        <begin position="88"/>
        <end position="102"/>
    </location>
</feature>
<feature type="disulfide bond" evidence="4">
    <location>
        <begin position="92"/>
        <end position="110"/>
    </location>
</feature>
<name>CRMB_CWPXG</name>
<organism>
    <name type="scientific">Cowpox virus (strain GRI-90 / Grishak)</name>
    <name type="common">CPV</name>
    <dbReference type="NCBI Taxonomy" id="265871"/>
    <lineage>
        <taxon>Viruses</taxon>
        <taxon>Varidnaviria</taxon>
        <taxon>Bamfordvirae</taxon>
        <taxon>Nucleocytoviricota</taxon>
        <taxon>Pokkesviricetes</taxon>
        <taxon>Chitovirales</taxon>
        <taxon>Poxviridae</taxon>
        <taxon>Chordopoxvirinae</taxon>
        <taxon>Orthopoxvirus</taxon>
        <taxon>Cowpox virus</taxon>
    </lineage>
</organism>
<evidence type="ECO:0000250" key="1">
    <source>
        <dbReference type="UniProtKB" id="P0DSV7"/>
    </source>
</evidence>
<evidence type="ECO:0000250" key="2">
    <source>
        <dbReference type="UniProtKB" id="Q76ZJ3"/>
    </source>
</evidence>
<evidence type="ECO:0000255" key="3"/>
<evidence type="ECO:0000255" key="4">
    <source>
        <dbReference type="PROSITE-ProRule" id="PRU00206"/>
    </source>
</evidence>
<evidence type="ECO:0000269" key="5">
    <source>
    </source>
</evidence>
<evidence type="ECO:0000305" key="6"/>
<gene>
    <name type="primary">OPG002</name>
    <name type="synonym">CRMB1</name>
    <name type="synonym">D2L</name>
</gene>
<gene>
    <name type="primary">CRMB2</name>
    <name type="ORF">I4R</name>
</gene>
<proteinExistence type="inferred from homology"/>
<keyword id="KW-1015">Disulfide bond</keyword>
<keyword id="KW-0325">Glycoprotein</keyword>
<keyword id="KW-0675">Receptor</keyword>
<keyword id="KW-0677">Repeat</keyword>
<keyword id="KW-0964">Secreted</keyword>
<keyword id="KW-0732">Signal</keyword>
<reference key="1">
    <citation type="journal article" date="1998" name="Virology">
        <title>The genomic sequence analysis of the left and right species-specific terminal region of a cowpox virus strain reveals unique sequences and a cluster of intact ORFs for immunomodulatory and host range proteins.</title>
        <authorList>
            <person name="Shchelkunov S.N."/>
            <person name="Safronov P.F."/>
            <person name="Totmenin A.V."/>
            <person name="Petrov N.A."/>
            <person name="Ryazankina O.I."/>
            <person name="Gutorov V.V."/>
            <person name="Kotwal G.J."/>
        </authorList>
    </citation>
    <scope>NUCLEOTIDE SEQUENCE [GENOMIC DNA]</scope>
    <source>
        <strain>GRI-90 / Grishak</strain>
    </source>
</reference>
<reference key="2">
    <citation type="journal article" date="1994" name="Virology">
        <title>Cowpox virus contains two copies of an early gene encoding a soluble secreted form of the type II TNF receptor.</title>
        <authorList>
            <person name="Hu F.Q."/>
            <person name="Smith C.A."/>
            <person name="Pickup D.J."/>
        </authorList>
    </citation>
    <scope>FUNCTION</scope>
    <source>
        <strain>Brighton red</strain>
    </source>
</reference>
<sequence length="351" mass="38254">MKSVLYSYILFLSCIIINGRDIAPHAPSNGKCKDNEYNRHNLCCLSCPPGTYASRLCDSKTNTNTQCTPCGSGTFTSRNNHLPACLSCNGRCDSNQVETRSCNTTHNRICECAPGYYCLLKGSSGCKACVSQTKCGIGYGVSGHTSTGDVVCSPCGLGTYSHTVSSADKCEPVPSNTFNYIDVEINLYPVNDTSCTRTTTTGLSESISTSELTITMNHKDCDPVFRDGYFSVLNKVATSGFFTGENRYQNISKVCTLNFEIKCNNKDSSSKQLTKTKNDDGIMPHSETVTLVGDCLSSVDIYILYSNTNTQDYETDTISYHVGNVLDVDSHMPGSCDIHKLITNSKPTRFL</sequence>
<protein>
    <recommendedName>
        <fullName>Soluble TNF receptor II</fullName>
    </recommendedName>
    <alternativeName>
        <fullName>Cytokine response-modifying protein B</fullName>
    </alternativeName>
</protein>
<accession>O73559</accession>
<accession>P87602</accession>
<dbReference type="EMBL" id="X94355">
    <property type="protein sequence ID" value="CAA64087.2"/>
    <property type="molecule type" value="Genomic_DNA"/>
</dbReference>
<dbReference type="EMBL" id="X94355">
    <property type="protein sequence ID" value="CAD90756.1"/>
    <property type="molecule type" value="Genomic_DNA"/>
</dbReference>
<dbReference type="SMR" id="O73559"/>
<dbReference type="GlyCosmos" id="O73559">
    <property type="glycosylation" value="3 sites, No reported glycans"/>
</dbReference>
<dbReference type="Proteomes" id="UP000137384">
    <property type="component" value="Segment"/>
</dbReference>
<dbReference type="GO" id="GO:0005576">
    <property type="term" value="C:extracellular region"/>
    <property type="evidence" value="ECO:0007669"/>
    <property type="project" value="UniProtKB-SubCell"/>
</dbReference>
<dbReference type="GO" id="GO:0043120">
    <property type="term" value="F:tumor necrosis factor binding"/>
    <property type="evidence" value="ECO:0007669"/>
    <property type="project" value="TreeGrafter"/>
</dbReference>
<dbReference type="GO" id="GO:0005031">
    <property type="term" value="F:tumor necrosis factor receptor activity"/>
    <property type="evidence" value="ECO:0007669"/>
    <property type="project" value="InterPro"/>
</dbReference>
<dbReference type="GO" id="GO:0051044">
    <property type="term" value="P:positive regulation of membrane protein ectodomain proteolysis"/>
    <property type="evidence" value="ECO:0007669"/>
    <property type="project" value="TreeGrafter"/>
</dbReference>
<dbReference type="GO" id="GO:0042129">
    <property type="term" value="P:regulation of T cell proliferation"/>
    <property type="evidence" value="ECO:0007669"/>
    <property type="project" value="TreeGrafter"/>
</dbReference>
<dbReference type="GO" id="GO:0052031">
    <property type="term" value="P:symbiont-mediated perturbation of host defense response"/>
    <property type="evidence" value="ECO:0007669"/>
    <property type="project" value="InterPro"/>
</dbReference>
<dbReference type="CDD" id="cd15839">
    <property type="entry name" value="TNFRSF_viral"/>
    <property type="match status" value="1"/>
</dbReference>
<dbReference type="Gene3D" id="2.60.240.20">
    <property type="match status" value="1"/>
</dbReference>
<dbReference type="Gene3D" id="2.10.50.10">
    <property type="entry name" value="Tumor Necrosis Factor Receptor, subunit A, domain 2"/>
    <property type="match status" value="2"/>
</dbReference>
<dbReference type="InterPro" id="IPR010806">
    <property type="entry name" value="Poxvirus_TNF-rcpt-II_C"/>
</dbReference>
<dbReference type="InterPro" id="IPR011172">
    <property type="entry name" value="Poxvirus_TNF_rcpt-II"/>
</dbReference>
<dbReference type="InterPro" id="IPR051670">
    <property type="entry name" value="TNF_chemokine_rcpt-like"/>
</dbReference>
<dbReference type="InterPro" id="IPR001368">
    <property type="entry name" value="TNFR/NGFR_Cys_rich_reg"/>
</dbReference>
<dbReference type="InterPro" id="IPR034059">
    <property type="entry name" value="TNFRSF_N_viral"/>
</dbReference>
<dbReference type="PANTHER" id="PTHR47386">
    <property type="entry name" value="TUMOR NECROSIS FACTOR RECEPTOR SUPERFAMILY MEMBER 1B"/>
    <property type="match status" value="1"/>
</dbReference>
<dbReference type="PANTHER" id="PTHR47386:SF1">
    <property type="entry name" value="TUMOR NECROSIS FACTOR RECEPTOR SUPERFAMILY MEMBER 1B"/>
    <property type="match status" value="1"/>
</dbReference>
<dbReference type="Pfam" id="PF07190">
    <property type="entry name" value="CrmD_SECRET"/>
    <property type="match status" value="1"/>
</dbReference>
<dbReference type="Pfam" id="PF00020">
    <property type="entry name" value="TNFR_c6"/>
    <property type="match status" value="1"/>
</dbReference>
<dbReference type="PIRSF" id="PIRSF001790">
    <property type="entry name" value="TNF_C22L"/>
    <property type="match status" value="1"/>
</dbReference>
<dbReference type="SMART" id="SM00208">
    <property type="entry name" value="TNFR"/>
    <property type="match status" value="3"/>
</dbReference>
<dbReference type="SUPFAM" id="SSF57586">
    <property type="entry name" value="TNF receptor-like"/>
    <property type="match status" value="2"/>
</dbReference>
<dbReference type="PROSITE" id="PS00652">
    <property type="entry name" value="TNFR_NGFR_1"/>
    <property type="match status" value="2"/>
</dbReference>
<dbReference type="PROSITE" id="PS50050">
    <property type="entry name" value="TNFR_NGFR_2"/>
    <property type="match status" value="2"/>
</dbReference>